<feature type="chain" id="PRO_0000285634" description="rRNA-processing protein UTP23 homolog">
    <location>
        <begin position="1"/>
        <end position="249"/>
    </location>
</feature>
<feature type="region of interest" description="Disordered" evidence="2">
    <location>
        <begin position="180"/>
        <end position="249"/>
    </location>
</feature>
<feature type="compositionally biased region" description="Basic residues" evidence="2">
    <location>
        <begin position="224"/>
        <end position="235"/>
    </location>
</feature>
<feature type="compositionally biased region" description="Basic and acidic residues" evidence="2">
    <location>
        <begin position="240"/>
        <end position="249"/>
    </location>
</feature>
<feature type="modified residue" description="Phosphoserine" evidence="5">
    <location>
        <position position="174"/>
    </location>
</feature>
<feature type="cross-link" description="Glycyl lysine isopeptide (Lys-Gly) (interchain with G-Cter in SUMO2)" evidence="6">
    <location>
        <position position="179"/>
    </location>
</feature>
<feature type="splice variant" id="VSP_024874" description="In isoform 2." evidence="3">
    <original>DQNLSVKVKKKPGVPLMFIIQNTM</original>
    <variation>YIPRMYTFCTNYGGQQYVIDALIG</variation>
    <location>
        <begin position="122"/>
        <end position="145"/>
    </location>
</feature>
<feature type="splice variant" id="VSP_024875" description="In isoform 2." evidence="3">
    <location>
        <begin position="146"/>
        <end position="249"/>
    </location>
</feature>
<feature type="sequence variant" id="VAR_032031" description="In dbSNP:rs16888722.">
    <original>H</original>
    <variation>R</variation>
    <location>
        <position position="170"/>
    </location>
</feature>
<feature type="sequence variant" id="VAR_032032" description="In dbSNP:rs1133950.">
    <original>K</original>
    <variation>Q</variation>
    <location>
        <position position="195"/>
    </location>
</feature>
<feature type="sequence variant" id="VAR_032033" description="In dbSNP:rs16888728.">
    <original>P</original>
    <variation>L</variation>
    <location>
        <position position="215"/>
    </location>
</feature>
<feature type="sequence conflict" description="In Ref. 4; AAH05955/AAH22441." evidence="4" ref="4">
    <original>K</original>
    <variation>R</variation>
    <location>
        <position position="225"/>
    </location>
</feature>
<proteinExistence type="evidence at protein level"/>
<comment type="function">
    <text evidence="1">Involved in rRNA-processing and ribosome biogenesis.</text>
</comment>
<comment type="interaction">
    <interactant intactId="EBI-5457544">
        <id>Q9BRU9</id>
    </interactant>
    <interactant intactId="EBI-3867333">
        <id>A8MQ03</id>
        <label>CYSRT1</label>
    </interactant>
    <organismsDiffer>false</organismsDiffer>
    <experiments>3</experiments>
</comment>
<comment type="interaction">
    <interactant intactId="EBI-5457544">
        <id>Q9BRU9</id>
    </interactant>
    <interactant intactId="EBI-618309">
        <id>Q08379</id>
        <label>GOLGA2</label>
    </interactant>
    <organismsDiffer>false</organismsDiffer>
    <experiments>3</experiments>
</comment>
<comment type="interaction">
    <interactant intactId="EBI-5457544">
        <id>Q9BRU9</id>
    </interactant>
    <interactant intactId="EBI-747754">
        <id>P28799</id>
        <label>GRN</label>
    </interactant>
    <organismsDiffer>false</organismsDiffer>
    <experiments>3</experiments>
</comment>
<comment type="interaction">
    <interactant intactId="EBI-5457544">
        <id>Q9BRU9</id>
    </interactant>
    <interactant intactId="EBI-948001">
        <id>Q15323</id>
        <label>KRT31</label>
    </interactant>
    <organismsDiffer>false</organismsDiffer>
    <experiments>3</experiments>
</comment>
<comment type="interaction">
    <interactant intactId="EBI-5457544">
        <id>Q9BRU9</id>
    </interactant>
    <interactant intactId="EBI-1047093">
        <id>O76011</id>
        <label>KRT34</label>
    </interactant>
    <organismsDiffer>false</organismsDiffer>
    <experiments>3</experiments>
</comment>
<comment type="interaction">
    <interactant intactId="EBI-5457544">
        <id>Q9BRU9</id>
    </interactant>
    <interactant intactId="EBI-1047263">
        <id>O76015</id>
        <label>KRT38</label>
    </interactant>
    <organismsDiffer>false</organismsDiffer>
    <experiments>3</experiments>
</comment>
<comment type="interaction">
    <interactant intactId="EBI-5457544">
        <id>Q9BRU9</id>
    </interactant>
    <interactant intactId="EBI-10171697">
        <id>Q6A162</id>
        <label>KRT40</label>
    </interactant>
    <organismsDiffer>false</organismsDiffer>
    <experiments>3</experiments>
</comment>
<comment type="interaction">
    <interactant intactId="EBI-5457544">
        <id>Q9BRU9</id>
    </interactant>
    <interactant intactId="EBI-11749135">
        <id>Q8IUG1</id>
        <label>KRTAP1-3</label>
    </interactant>
    <organismsDiffer>false</organismsDiffer>
    <experiments>3</experiments>
</comment>
<comment type="interaction">
    <interactant intactId="EBI-5457544">
        <id>Q9BRU9</id>
    </interactant>
    <interactant intactId="EBI-10172150">
        <id>P60370</id>
        <label>KRTAP10-5</label>
    </interactant>
    <organismsDiffer>false</organismsDiffer>
    <experiments>3</experiments>
</comment>
<comment type="interaction">
    <interactant intactId="EBI-5457544">
        <id>Q9BRU9</id>
    </interactant>
    <interactant intactId="EBI-10171774">
        <id>P60410</id>
        <label>KRTAP10-8</label>
    </interactant>
    <organismsDiffer>false</organismsDiffer>
    <experiments>6</experiments>
</comment>
<comment type="interaction">
    <interactant intactId="EBI-5457544">
        <id>Q9BRU9</id>
    </interactant>
    <interactant intactId="EBI-10172052">
        <id>P60411</id>
        <label>KRTAP10-9</label>
    </interactant>
    <organismsDiffer>false</organismsDiffer>
    <experiments>3</experiments>
</comment>
<comment type="interaction">
    <interactant intactId="EBI-5457544">
        <id>Q9BRU9</id>
    </interactant>
    <interactant intactId="EBI-11953334">
        <id>P60328</id>
        <label>KRTAP12-3</label>
    </interactant>
    <organismsDiffer>false</organismsDiffer>
    <experiments>3</experiments>
</comment>
<comment type="interaction">
    <interactant intactId="EBI-5457544">
        <id>Q9BRU9</id>
    </interactant>
    <interactant intactId="EBI-16439278">
        <id>Q6FHY5</id>
        <label>MEOX2</label>
    </interactant>
    <organismsDiffer>false</organismsDiffer>
    <experiments>3</experiments>
</comment>
<comment type="interaction">
    <interactant intactId="EBI-5457544">
        <id>Q9BRU9</id>
    </interactant>
    <interactant intactId="EBI-10172526">
        <id>Q9UJV3-2</id>
        <label>MID2</label>
    </interactant>
    <organismsDiffer>false</organismsDiffer>
    <experiments>3</experiments>
</comment>
<comment type="interaction">
    <interactant intactId="EBI-5457544">
        <id>Q9BRU9</id>
    </interactant>
    <interactant intactId="EBI-10271199">
        <id>Q8NI38</id>
        <label>NFKBID</label>
    </interactant>
    <organismsDiffer>false</organismsDiffer>
    <experiments>3</experiments>
</comment>
<comment type="interaction">
    <interactant intactId="EBI-5457544">
        <id>Q9BRU9</id>
    </interactant>
    <interactant intactId="EBI-945833">
        <id>Q7Z3S9</id>
        <label>NOTCH2NLA</label>
    </interactant>
    <organismsDiffer>false</organismsDiffer>
    <experiments>3</experiments>
</comment>
<comment type="interaction">
    <interactant intactId="EBI-5457544">
        <id>Q9BRU9</id>
    </interactant>
    <interactant intactId="EBI-22310682">
        <id>P0DPK4</id>
        <label>NOTCH2NLC</label>
    </interactant>
    <organismsDiffer>false</organismsDiffer>
    <experiments>3</experiments>
</comment>
<comment type="interaction">
    <interactant intactId="EBI-5457544">
        <id>Q9BRU9</id>
    </interactant>
    <interactant intactId="EBI-742764">
        <id>O76083</id>
        <label>PDE9A</label>
    </interactant>
    <organismsDiffer>false</organismsDiffer>
    <experiments>3</experiments>
</comment>
<comment type="interaction">
    <interactant intactId="EBI-5457544">
        <id>Q9BRU9</id>
    </interactant>
    <interactant intactId="EBI-533224">
        <id>P15884</id>
        <label>TCF4</label>
    </interactant>
    <organismsDiffer>false</organismsDiffer>
    <experiments>3</experiments>
</comment>
<comment type="interaction">
    <interactant intactId="EBI-5457544">
        <id>Q9BRU9</id>
    </interactant>
    <interactant intactId="EBI-11139477">
        <id>Q96N21</id>
        <label>TEPSIN</label>
    </interactant>
    <organismsDiffer>false</organismsDiffer>
    <experiments>3</experiments>
</comment>
<comment type="interaction">
    <interactant intactId="EBI-5457544">
        <id>Q9BRU9</id>
    </interactant>
    <interactant intactId="EBI-355744">
        <id>Q12933</id>
        <label>TRAF2</label>
    </interactant>
    <organismsDiffer>false</organismsDiffer>
    <experiments>3</experiments>
</comment>
<comment type="interaction">
    <interactant intactId="EBI-5457544">
        <id>Q9BRU9</id>
    </interactant>
    <interactant intactId="EBI-492476">
        <id>Q96RU7</id>
        <label>TRIB3</label>
    </interactant>
    <organismsDiffer>false</organismsDiffer>
    <experiments>3</experiments>
</comment>
<comment type="interaction">
    <interactant intactId="EBI-5457544">
        <id>Q9BRU9</id>
    </interactant>
    <interactant intactId="EBI-740098">
        <id>P36406</id>
        <label>TRIM23</label>
    </interactant>
    <organismsDiffer>false</organismsDiffer>
    <experiments>3</experiments>
</comment>
<comment type="interaction">
    <interactant intactId="EBI-5457544">
        <id>Q9BRU9</id>
    </interactant>
    <interactant intactId="EBI-719493">
        <id>P14373</id>
        <label>TRIM27</label>
    </interactant>
    <organismsDiffer>false</organismsDiffer>
    <experiments>3</experiments>
</comment>
<comment type="subcellular location">
    <subcellularLocation>
        <location evidence="1">Nucleus</location>
        <location evidence="1">Nucleolus</location>
    </subcellularLocation>
</comment>
<comment type="alternative products">
    <event type="alternative splicing"/>
    <isoform>
        <id>Q9BRU9-1</id>
        <name>1</name>
        <sequence type="displayed"/>
    </isoform>
    <isoform>
        <id>Q9BRU9-2</id>
        <name>2</name>
        <sequence type="described" ref="VSP_024874 VSP_024875"/>
    </isoform>
</comment>
<comment type="similarity">
    <text evidence="4">Belongs to the UTP23/FCF1 family. UTP23 subfamily.</text>
</comment>
<accession>Q9BRU9</accession>
<accession>B2RE25</accession>
<accession>Q96NJ8</accession>
<protein>
    <recommendedName>
        <fullName>rRNA-processing protein UTP23 homolog</fullName>
    </recommendedName>
</protein>
<name>UTP23_HUMAN</name>
<reference key="1">
    <citation type="journal article" date="2004" name="Nat. Genet.">
        <title>Complete sequencing and characterization of 21,243 full-length human cDNAs.</title>
        <authorList>
            <person name="Ota T."/>
            <person name="Suzuki Y."/>
            <person name="Nishikawa T."/>
            <person name="Otsuki T."/>
            <person name="Sugiyama T."/>
            <person name="Irie R."/>
            <person name="Wakamatsu A."/>
            <person name="Hayashi K."/>
            <person name="Sato H."/>
            <person name="Nagai K."/>
            <person name="Kimura K."/>
            <person name="Makita H."/>
            <person name="Sekine M."/>
            <person name="Obayashi M."/>
            <person name="Nishi T."/>
            <person name="Shibahara T."/>
            <person name="Tanaka T."/>
            <person name="Ishii S."/>
            <person name="Yamamoto J."/>
            <person name="Saito K."/>
            <person name="Kawai Y."/>
            <person name="Isono Y."/>
            <person name="Nakamura Y."/>
            <person name="Nagahari K."/>
            <person name="Murakami K."/>
            <person name="Yasuda T."/>
            <person name="Iwayanagi T."/>
            <person name="Wagatsuma M."/>
            <person name="Shiratori A."/>
            <person name="Sudo H."/>
            <person name="Hosoiri T."/>
            <person name="Kaku Y."/>
            <person name="Kodaira H."/>
            <person name="Kondo H."/>
            <person name="Sugawara M."/>
            <person name="Takahashi M."/>
            <person name="Kanda K."/>
            <person name="Yokoi T."/>
            <person name="Furuya T."/>
            <person name="Kikkawa E."/>
            <person name="Omura Y."/>
            <person name="Abe K."/>
            <person name="Kamihara K."/>
            <person name="Katsuta N."/>
            <person name="Sato K."/>
            <person name="Tanikawa M."/>
            <person name="Yamazaki M."/>
            <person name="Ninomiya K."/>
            <person name="Ishibashi T."/>
            <person name="Yamashita H."/>
            <person name="Murakawa K."/>
            <person name="Fujimori K."/>
            <person name="Tanai H."/>
            <person name="Kimata M."/>
            <person name="Watanabe M."/>
            <person name="Hiraoka S."/>
            <person name="Chiba Y."/>
            <person name="Ishida S."/>
            <person name="Ono Y."/>
            <person name="Takiguchi S."/>
            <person name="Watanabe S."/>
            <person name="Yosida M."/>
            <person name="Hotuta T."/>
            <person name="Kusano J."/>
            <person name="Kanehori K."/>
            <person name="Takahashi-Fujii A."/>
            <person name="Hara H."/>
            <person name="Tanase T.-O."/>
            <person name="Nomura Y."/>
            <person name="Togiya S."/>
            <person name="Komai F."/>
            <person name="Hara R."/>
            <person name="Takeuchi K."/>
            <person name="Arita M."/>
            <person name="Imose N."/>
            <person name="Musashino K."/>
            <person name="Yuuki H."/>
            <person name="Oshima A."/>
            <person name="Sasaki N."/>
            <person name="Aotsuka S."/>
            <person name="Yoshikawa Y."/>
            <person name="Matsunawa H."/>
            <person name="Ichihara T."/>
            <person name="Shiohata N."/>
            <person name="Sano S."/>
            <person name="Moriya S."/>
            <person name="Momiyama H."/>
            <person name="Satoh N."/>
            <person name="Takami S."/>
            <person name="Terashima Y."/>
            <person name="Suzuki O."/>
            <person name="Nakagawa S."/>
            <person name="Senoh A."/>
            <person name="Mizoguchi H."/>
            <person name="Goto Y."/>
            <person name="Shimizu F."/>
            <person name="Wakebe H."/>
            <person name="Hishigaki H."/>
            <person name="Watanabe T."/>
            <person name="Sugiyama A."/>
            <person name="Takemoto M."/>
            <person name="Kawakami B."/>
            <person name="Yamazaki M."/>
            <person name="Watanabe K."/>
            <person name="Kumagai A."/>
            <person name="Itakura S."/>
            <person name="Fukuzumi Y."/>
            <person name="Fujimori Y."/>
            <person name="Komiyama M."/>
            <person name="Tashiro H."/>
            <person name="Tanigami A."/>
            <person name="Fujiwara T."/>
            <person name="Ono T."/>
            <person name="Yamada K."/>
            <person name="Fujii Y."/>
            <person name="Ozaki K."/>
            <person name="Hirao M."/>
            <person name="Ohmori Y."/>
            <person name="Kawabata A."/>
            <person name="Hikiji T."/>
            <person name="Kobatake N."/>
            <person name="Inagaki H."/>
            <person name="Ikema Y."/>
            <person name="Okamoto S."/>
            <person name="Okitani R."/>
            <person name="Kawakami T."/>
            <person name="Noguchi S."/>
            <person name="Itoh T."/>
            <person name="Shigeta K."/>
            <person name="Senba T."/>
            <person name="Matsumura K."/>
            <person name="Nakajima Y."/>
            <person name="Mizuno T."/>
            <person name="Morinaga M."/>
            <person name="Sasaki M."/>
            <person name="Togashi T."/>
            <person name="Oyama M."/>
            <person name="Hata H."/>
            <person name="Watanabe M."/>
            <person name="Komatsu T."/>
            <person name="Mizushima-Sugano J."/>
            <person name="Satoh T."/>
            <person name="Shirai Y."/>
            <person name="Takahashi Y."/>
            <person name="Nakagawa K."/>
            <person name="Okumura K."/>
            <person name="Nagase T."/>
            <person name="Nomura N."/>
            <person name="Kikuchi H."/>
            <person name="Masuho Y."/>
            <person name="Yamashita R."/>
            <person name="Nakai K."/>
            <person name="Yada T."/>
            <person name="Nakamura Y."/>
            <person name="Ohara O."/>
            <person name="Isogai T."/>
            <person name="Sugano S."/>
        </authorList>
    </citation>
    <scope>NUCLEOTIDE SEQUENCE [LARGE SCALE MRNA] (ISOFORMS 1 AND 2)</scope>
    <source>
        <tissue>Brain</tissue>
        <tissue>Trachea</tissue>
    </source>
</reference>
<reference key="2">
    <citation type="journal article" date="2006" name="Nature">
        <title>DNA sequence and analysis of human chromosome 8.</title>
        <authorList>
            <person name="Nusbaum C."/>
            <person name="Mikkelsen T.S."/>
            <person name="Zody M.C."/>
            <person name="Asakawa S."/>
            <person name="Taudien S."/>
            <person name="Garber M."/>
            <person name="Kodira C.D."/>
            <person name="Schueler M.G."/>
            <person name="Shimizu A."/>
            <person name="Whittaker C.A."/>
            <person name="Chang J.L."/>
            <person name="Cuomo C.A."/>
            <person name="Dewar K."/>
            <person name="FitzGerald M.G."/>
            <person name="Yang X."/>
            <person name="Allen N.R."/>
            <person name="Anderson S."/>
            <person name="Asakawa T."/>
            <person name="Blechschmidt K."/>
            <person name="Bloom T."/>
            <person name="Borowsky M.L."/>
            <person name="Butler J."/>
            <person name="Cook A."/>
            <person name="Corum B."/>
            <person name="DeArellano K."/>
            <person name="DeCaprio D."/>
            <person name="Dooley K.T."/>
            <person name="Dorris L. III"/>
            <person name="Engels R."/>
            <person name="Gloeckner G."/>
            <person name="Hafez N."/>
            <person name="Hagopian D.S."/>
            <person name="Hall J.L."/>
            <person name="Ishikawa S.K."/>
            <person name="Jaffe D.B."/>
            <person name="Kamat A."/>
            <person name="Kudoh J."/>
            <person name="Lehmann R."/>
            <person name="Lokitsang T."/>
            <person name="Macdonald P."/>
            <person name="Major J.E."/>
            <person name="Matthews C.D."/>
            <person name="Mauceli E."/>
            <person name="Menzel U."/>
            <person name="Mihalev A.H."/>
            <person name="Minoshima S."/>
            <person name="Murayama Y."/>
            <person name="Naylor J.W."/>
            <person name="Nicol R."/>
            <person name="Nguyen C."/>
            <person name="O'Leary S.B."/>
            <person name="O'Neill K."/>
            <person name="Parker S.C.J."/>
            <person name="Polley A."/>
            <person name="Raymond C.K."/>
            <person name="Reichwald K."/>
            <person name="Rodriguez J."/>
            <person name="Sasaki T."/>
            <person name="Schilhabel M."/>
            <person name="Siddiqui R."/>
            <person name="Smith C.L."/>
            <person name="Sneddon T.P."/>
            <person name="Talamas J.A."/>
            <person name="Tenzin P."/>
            <person name="Topham K."/>
            <person name="Venkataraman V."/>
            <person name="Wen G."/>
            <person name="Yamazaki S."/>
            <person name="Young S.K."/>
            <person name="Zeng Q."/>
            <person name="Zimmer A.R."/>
            <person name="Rosenthal A."/>
            <person name="Birren B.W."/>
            <person name="Platzer M."/>
            <person name="Shimizu N."/>
            <person name="Lander E.S."/>
        </authorList>
    </citation>
    <scope>NUCLEOTIDE SEQUENCE [LARGE SCALE GENOMIC DNA]</scope>
</reference>
<reference key="3">
    <citation type="submission" date="2005-07" db="EMBL/GenBank/DDBJ databases">
        <authorList>
            <person name="Mural R.J."/>
            <person name="Istrail S."/>
            <person name="Sutton G.G."/>
            <person name="Florea L."/>
            <person name="Halpern A.L."/>
            <person name="Mobarry C.M."/>
            <person name="Lippert R."/>
            <person name="Walenz B."/>
            <person name="Shatkay H."/>
            <person name="Dew I."/>
            <person name="Miller J.R."/>
            <person name="Flanigan M.J."/>
            <person name="Edwards N.J."/>
            <person name="Bolanos R."/>
            <person name="Fasulo D."/>
            <person name="Halldorsson B.V."/>
            <person name="Hannenhalli S."/>
            <person name="Turner R."/>
            <person name="Yooseph S."/>
            <person name="Lu F."/>
            <person name="Nusskern D.R."/>
            <person name="Shue B.C."/>
            <person name="Zheng X.H."/>
            <person name="Zhong F."/>
            <person name="Delcher A.L."/>
            <person name="Huson D.H."/>
            <person name="Kravitz S.A."/>
            <person name="Mouchard L."/>
            <person name="Reinert K."/>
            <person name="Remington K.A."/>
            <person name="Clark A.G."/>
            <person name="Waterman M.S."/>
            <person name="Eichler E.E."/>
            <person name="Adams M.D."/>
            <person name="Hunkapiller M.W."/>
            <person name="Myers E.W."/>
            <person name="Venter J.C."/>
        </authorList>
    </citation>
    <scope>NUCLEOTIDE SEQUENCE [LARGE SCALE GENOMIC DNA]</scope>
</reference>
<reference key="4">
    <citation type="journal article" date="2004" name="Genome Res.">
        <title>The status, quality, and expansion of the NIH full-length cDNA project: the Mammalian Gene Collection (MGC).</title>
        <authorList>
            <consortium name="The MGC Project Team"/>
        </authorList>
    </citation>
    <scope>NUCLEOTIDE SEQUENCE [LARGE SCALE MRNA] (ISOFORM 1)</scope>
    <source>
        <tissue>Brain</tissue>
    </source>
</reference>
<reference key="5">
    <citation type="journal article" date="2010" name="Sci. Signal.">
        <title>Quantitative phosphoproteomics reveals widespread full phosphorylation site occupancy during mitosis.</title>
        <authorList>
            <person name="Olsen J.V."/>
            <person name="Vermeulen M."/>
            <person name="Santamaria A."/>
            <person name="Kumar C."/>
            <person name="Miller M.L."/>
            <person name="Jensen L.J."/>
            <person name="Gnad F."/>
            <person name="Cox J."/>
            <person name="Jensen T.S."/>
            <person name="Nigg E.A."/>
            <person name="Brunak S."/>
            <person name="Mann M."/>
        </authorList>
    </citation>
    <scope>PHOSPHORYLATION [LARGE SCALE ANALYSIS] AT SER-174</scope>
    <scope>IDENTIFICATION BY MASS SPECTROMETRY [LARGE SCALE ANALYSIS]</scope>
    <source>
        <tissue>Cervix carcinoma</tissue>
    </source>
</reference>
<reference key="6">
    <citation type="journal article" date="2017" name="Nat. Struct. Mol. Biol.">
        <title>Site-specific mapping of the human SUMO proteome reveals co-modification with phosphorylation.</title>
        <authorList>
            <person name="Hendriks I.A."/>
            <person name="Lyon D."/>
            <person name="Young C."/>
            <person name="Jensen L.J."/>
            <person name="Vertegaal A.C."/>
            <person name="Nielsen M.L."/>
        </authorList>
    </citation>
    <scope>SUMOYLATION [LARGE SCALE ANALYSIS] AT LYS-179</scope>
    <scope>IDENTIFICATION BY MASS SPECTROMETRY [LARGE SCALE ANALYSIS]</scope>
</reference>
<organism>
    <name type="scientific">Homo sapiens</name>
    <name type="common">Human</name>
    <dbReference type="NCBI Taxonomy" id="9606"/>
    <lineage>
        <taxon>Eukaryota</taxon>
        <taxon>Metazoa</taxon>
        <taxon>Chordata</taxon>
        <taxon>Craniata</taxon>
        <taxon>Vertebrata</taxon>
        <taxon>Euteleostomi</taxon>
        <taxon>Mammalia</taxon>
        <taxon>Eutheria</taxon>
        <taxon>Euarchontoglires</taxon>
        <taxon>Primates</taxon>
        <taxon>Haplorrhini</taxon>
        <taxon>Catarrhini</taxon>
        <taxon>Hominidae</taxon>
        <taxon>Homo</taxon>
    </lineage>
</organism>
<sequence length="249" mass="28402">MKITRQKHAKKHLGFFRNNFGVREPYQILLDGTFCQAALRGRIQLREQLPRYLMGETQLCTTRCVLKELETLGKDLYGAKLIAQKCQVRNCPHFKNAVSGSECLLSMVEEGNPHHYFVATQDQNLSVKVKKKPGVPLMFIIQNTMVLDKPSPKTIAFVKAVESGQLVSVHEKESIKHLKEEQGLVKNTEQSRRKKRKKISGPNPLSCLKKKKKAPDTQSSASEKKRKRKRIRNRSNPKVLSEKQNAEGE</sequence>
<evidence type="ECO:0000250" key="1"/>
<evidence type="ECO:0000256" key="2">
    <source>
        <dbReference type="SAM" id="MobiDB-lite"/>
    </source>
</evidence>
<evidence type="ECO:0000303" key="3">
    <source>
    </source>
</evidence>
<evidence type="ECO:0000305" key="4"/>
<evidence type="ECO:0007744" key="5">
    <source>
    </source>
</evidence>
<evidence type="ECO:0007744" key="6">
    <source>
    </source>
</evidence>
<gene>
    <name type="primary">UTP23</name>
    <name type="synonym">C8orf53</name>
</gene>
<keyword id="KW-0025">Alternative splicing</keyword>
<keyword id="KW-1017">Isopeptide bond</keyword>
<keyword id="KW-0539">Nucleus</keyword>
<keyword id="KW-0597">Phosphoprotein</keyword>
<keyword id="KW-1267">Proteomics identification</keyword>
<keyword id="KW-1185">Reference proteome</keyword>
<keyword id="KW-0690">Ribosome biogenesis</keyword>
<keyword id="KW-0698">rRNA processing</keyword>
<keyword id="KW-0832">Ubl conjugation</keyword>
<dbReference type="EMBL" id="AK055279">
    <property type="protein sequence ID" value="BAB70896.1"/>
    <property type="molecule type" value="mRNA"/>
</dbReference>
<dbReference type="EMBL" id="AK315770">
    <property type="protein sequence ID" value="BAG38122.1"/>
    <property type="molecule type" value="mRNA"/>
</dbReference>
<dbReference type="EMBL" id="AC087350">
    <property type="status" value="NOT_ANNOTATED_CDS"/>
    <property type="molecule type" value="Genomic_DNA"/>
</dbReference>
<dbReference type="EMBL" id="AP002905">
    <property type="status" value="NOT_ANNOTATED_CDS"/>
    <property type="molecule type" value="Genomic_DNA"/>
</dbReference>
<dbReference type="EMBL" id="CH471060">
    <property type="protein sequence ID" value="EAW91960.1"/>
    <property type="molecule type" value="Genomic_DNA"/>
</dbReference>
<dbReference type="EMBL" id="BC005955">
    <property type="protein sequence ID" value="AAH05955.1"/>
    <property type="molecule type" value="mRNA"/>
</dbReference>
<dbReference type="EMBL" id="BC022441">
    <property type="protein sequence ID" value="AAH22441.1"/>
    <property type="molecule type" value="mRNA"/>
</dbReference>
<dbReference type="CCDS" id="CCDS6320.1">
    <molecule id="Q9BRU9-1"/>
</dbReference>
<dbReference type="RefSeq" id="NP_115710.2">
    <molecule id="Q9BRU9-1"/>
    <property type="nucleotide sequence ID" value="NM_032334.3"/>
</dbReference>
<dbReference type="RefSeq" id="XP_054217326.1">
    <molecule id="Q9BRU9-1"/>
    <property type="nucleotide sequence ID" value="XM_054361351.1"/>
</dbReference>
<dbReference type="SMR" id="Q9BRU9"/>
<dbReference type="BioGRID" id="124021">
    <property type="interactions" value="354"/>
</dbReference>
<dbReference type="FunCoup" id="Q9BRU9">
    <property type="interactions" value="2509"/>
</dbReference>
<dbReference type="IntAct" id="Q9BRU9">
    <property type="interactions" value="177"/>
</dbReference>
<dbReference type="STRING" id="9606.ENSP00000308332"/>
<dbReference type="GlyGen" id="Q9BRU9">
    <property type="glycosylation" value="1 site, 1 O-linked glycan (1 site)"/>
</dbReference>
<dbReference type="iPTMnet" id="Q9BRU9"/>
<dbReference type="PhosphoSitePlus" id="Q9BRU9"/>
<dbReference type="SwissPalm" id="Q9BRU9"/>
<dbReference type="BioMuta" id="UTP23"/>
<dbReference type="DMDM" id="296452859"/>
<dbReference type="jPOST" id="Q9BRU9"/>
<dbReference type="MassIVE" id="Q9BRU9"/>
<dbReference type="PaxDb" id="9606-ENSP00000308332"/>
<dbReference type="PeptideAtlas" id="Q9BRU9"/>
<dbReference type="ProteomicsDB" id="78838">
    <molecule id="Q9BRU9-1"/>
</dbReference>
<dbReference type="ProteomicsDB" id="78839">
    <molecule id="Q9BRU9-2"/>
</dbReference>
<dbReference type="Pumba" id="Q9BRU9"/>
<dbReference type="Antibodypedia" id="42960">
    <property type="antibodies" value="75 antibodies from 16 providers"/>
</dbReference>
<dbReference type="DNASU" id="84294"/>
<dbReference type="Ensembl" id="ENST00000309822.7">
    <molecule id="Q9BRU9-1"/>
    <property type="protein sequence ID" value="ENSP00000308332.2"/>
    <property type="gene ID" value="ENSG00000147679.12"/>
</dbReference>
<dbReference type="GeneID" id="84294"/>
<dbReference type="KEGG" id="hsa:84294"/>
<dbReference type="MANE-Select" id="ENST00000309822.7">
    <property type="protein sequence ID" value="ENSP00000308332.2"/>
    <property type="RefSeq nucleotide sequence ID" value="NM_032334.3"/>
    <property type="RefSeq protein sequence ID" value="NP_115710.2"/>
</dbReference>
<dbReference type="UCSC" id="uc003yoc.4">
    <molecule id="Q9BRU9-1"/>
    <property type="organism name" value="human"/>
</dbReference>
<dbReference type="AGR" id="HGNC:28224"/>
<dbReference type="CTD" id="84294"/>
<dbReference type="DisGeNET" id="84294"/>
<dbReference type="GeneCards" id="UTP23"/>
<dbReference type="HGNC" id="HGNC:28224">
    <property type="gene designation" value="UTP23"/>
</dbReference>
<dbReference type="HPA" id="ENSG00000147679">
    <property type="expression patterns" value="Low tissue specificity"/>
</dbReference>
<dbReference type="neXtProt" id="NX_Q9BRU9"/>
<dbReference type="OpenTargets" id="ENSG00000147679"/>
<dbReference type="PharmGKB" id="PA162408778"/>
<dbReference type="VEuPathDB" id="HostDB:ENSG00000147679"/>
<dbReference type="eggNOG" id="KOG3164">
    <property type="taxonomic scope" value="Eukaryota"/>
</dbReference>
<dbReference type="GeneTree" id="ENSGT00940000153117"/>
<dbReference type="HOGENOM" id="CLU_053567_3_0_1"/>
<dbReference type="InParanoid" id="Q9BRU9"/>
<dbReference type="OMA" id="CCMQALY"/>
<dbReference type="OrthoDB" id="25675at2759"/>
<dbReference type="PAN-GO" id="Q9BRU9">
    <property type="GO annotations" value="3 GO annotations based on evolutionary models"/>
</dbReference>
<dbReference type="PhylomeDB" id="Q9BRU9"/>
<dbReference type="TreeFam" id="TF105804"/>
<dbReference type="PathwayCommons" id="Q9BRU9"/>
<dbReference type="SignaLink" id="Q9BRU9"/>
<dbReference type="BioGRID-ORCS" id="84294">
    <property type="hits" value="528 hits in 1165 CRISPR screens"/>
</dbReference>
<dbReference type="CD-CODE" id="91857CE7">
    <property type="entry name" value="Nucleolus"/>
</dbReference>
<dbReference type="ChiTaRS" id="UTP23">
    <property type="organism name" value="human"/>
</dbReference>
<dbReference type="GenomeRNAi" id="84294"/>
<dbReference type="Pharos" id="Q9BRU9">
    <property type="development level" value="Tbio"/>
</dbReference>
<dbReference type="PRO" id="PR:Q9BRU9"/>
<dbReference type="Proteomes" id="UP000005640">
    <property type="component" value="Chromosome 8"/>
</dbReference>
<dbReference type="RNAct" id="Q9BRU9">
    <property type="molecule type" value="protein"/>
</dbReference>
<dbReference type="Bgee" id="ENSG00000147679">
    <property type="expression patterns" value="Expressed in kidney epithelium and 191 other cell types or tissues"/>
</dbReference>
<dbReference type="ExpressionAtlas" id="Q9BRU9">
    <property type="expression patterns" value="baseline and differential"/>
</dbReference>
<dbReference type="GO" id="GO:0005730">
    <property type="term" value="C:nucleolus"/>
    <property type="evidence" value="ECO:0000318"/>
    <property type="project" value="GO_Central"/>
</dbReference>
<dbReference type="GO" id="GO:0032040">
    <property type="term" value="C:small-subunit processome"/>
    <property type="evidence" value="ECO:0000318"/>
    <property type="project" value="GO_Central"/>
</dbReference>
<dbReference type="GO" id="GO:0003730">
    <property type="term" value="F:mRNA 3'-UTR binding"/>
    <property type="evidence" value="ECO:0000314"/>
    <property type="project" value="CAFA"/>
</dbReference>
<dbReference type="GO" id="GO:0048027">
    <property type="term" value="F:mRNA 5'-UTR binding"/>
    <property type="evidence" value="ECO:0000314"/>
    <property type="project" value="CAFA"/>
</dbReference>
<dbReference type="GO" id="GO:0003723">
    <property type="term" value="F:RNA binding"/>
    <property type="evidence" value="ECO:0007005"/>
    <property type="project" value="UniProtKB"/>
</dbReference>
<dbReference type="GO" id="GO:0070181">
    <property type="term" value="F:small ribosomal subunit rRNA binding"/>
    <property type="evidence" value="ECO:0000318"/>
    <property type="project" value="GO_Central"/>
</dbReference>
<dbReference type="GO" id="GO:0000480">
    <property type="term" value="P:endonucleolytic cleavage in 5'-ETS of tricistronic rRNA transcript (SSU-rRNA, 5.8S rRNA, LSU-rRNA)"/>
    <property type="evidence" value="ECO:0007669"/>
    <property type="project" value="Ensembl"/>
</dbReference>
<dbReference type="CDD" id="cd09866">
    <property type="entry name" value="PIN_Fcf1-Utp23-H"/>
    <property type="match status" value="1"/>
</dbReference>
<dbReference type="FunFam" id="3.40.50.1010:FF:000006">
    <property type="entry name" value="rRNA-processing protein UTP23 homolog"/>
    <property type="match status" value="1"/>
</dbReference>
<dbReference type="Gene3D" id="3.40.50.1010">
    <property type="entry name" value="5'-nuclease"/>
    <property type="match status" value="1"/>
</dbReference>
<dbReference type="InterPro" id="IPR006984">
    <property type="entry name" value="Fcf1/Utp23"/>
</dbReference>
<dbReference type="InterPro" id="IPR029060">
    <property type="entry name" value="PIN-like_dom_sf"/>
</dbReference>
<dbReference type="PANTHER" id="PTHR12416">
    <property type="entry name" value="RRNA-PROCESSING PROTEIN UTP23 HOMOLOG"/>
    <property type="match status" value="1"/>
</dbReference>
<dbReference type="Pfam" id="PF04900">
    <property type="entry name" value="Fcf1"/>
    <property type="match status" value="1"/>
</dbReference>
<dbReference type="Pfam" id="PF24779">
    <property type="entry name" value="UTP23_sensor"/>
    <property type="match status" value="1"/>
</dbReference>
<dbReference type="SUPFAM" id="SSF88723">
    <property type="entry name" value="PIN domain-like"/>
    <property type="match status" value="1"/>
</dbReference>